<keyword id="KW-0158">Chromosome</keyword>
<keyword id="KW-0217">Developmental protein</keyword>
<keyword id="KW-0221">Differentiation</keyword>
<keyword id="KW-0903">Direct protein sequencing</keyword>
<keyword id="KW-0226">DNA condensation</keyword>
<keyword id="KW-0238">DNA-binding</keyword>
<keyword id="KW-0544">Nucleosome core</keyword>
<keyword id="KW-0539">Nucleus</keyword>
<keyword id="KW-0744">Spermatogenesis</keyword>
<evidence type="ECO:0000256" key="1">
    <source>
        <dbReference type="SAM" id="MobiDB-lite"/>
    </source>
</evidence>
<dbReference type="PIR" id="A38052">
    <property type="entry name" value="CLHRY2"/>
</dbReference>
<dbReference type="iPTMnet" id="P69009"/>
<dbReference type="GO" id="GO:0000786">
    <property type="term" value="C:nucleosome"/>
    <property type="evidence" value="ECO:0007669"/>
    <property type="project" value="UniProtKB-KW"/>
</dbReference>
<dbReference type="GO" id="GO:0005634">
    <property type="term" value="C:nucleus"/>
    <property type="evidence" value="ECO:0007669"/>
    <property type="project" value="UniProtKB-SubCell"/>
</dbReference>
<dbReference type="GO" id="GO:0003677">
    <property type="term" value="F:DNA binding"/>
    <property type="evidence" value="ECO:0007669"/>
    <property type="project" value="UniProtKB-KW"/>
</dbReference>
<dbReference type="GO" id="GO:0030154">
    <property type="term" value="P:cell differentiation"/>
    <property type="evidence" value="ECO:0007669"/>
    <property type="project" value="UniProtKB-KW"/>
</dbReference>
<dbReference type="GO" id="GO:0030261">
    <property type="term" value="P:chromosome condensation"/>
    <property type="evidence" value="ECO:0007669"/>
    <property type="project" value="UniProtKB-KW"/>
</dbReference>
<dbReference type="GO" id="GO:0007283">
    <property type="term" value="P:spermatogenesis"/>
    <property type="evidence" value="ECO:0007669"/>
    <property type="project" value="UniProtKB-KW"/>
</dbReference>
<proteinExistence type="evidence at protein level"/>
<protein>
    <recommendedName>
        <fullName>Protamine-YII</fullName>
    </recommendedName>
    <alternativeName>
        <fullName>Clupeine-YII</fullName>
    </alternativeName>
</protein>
<reference key="1">
    <citation type="journal article" date="1972" name="J. Biochem.">
        <title>Studies on protamines. XVI. The complete amino acid sequence of clupeine YII.</title>
        <authorList>
            <person name="Suzuki K."/>
            <person name="Ando T."/>
        </authorList>
    </citation>
    <scope>PROTEIN SEQUENCE</scope>
</reference>
<name>PRTY2_CLUPA</name>
<sequence length="30" mass="4049">PRRRTRRASRPVRRRRPRRVSRRRRARRRR</sequence>
<comment type="function">
    <text>Protamines substitute for histones in the chromatin of sperm during the haploid phase of spermatogenesis. They compact sperm DNA into a highly condensed, stable and inactive complex.</text>
</comment>
<comment type="subcellular location">
    <subcellularLocation>
        <location>Nucleus</location>
    </subcellularLocation>
    <subcellularLocation>
        <location>Chromosome</location>
    </subcellularLocation>
</comment>
<comment type="tissue specificity">
    <text>Testis.</text>
</comment>
<accession>P69009</accession>
<accession>P02335</accession>
<organism>
    <name type="scientific">Clupea pallasii</name>
    <name type="common">Pacific herring</name>
    <dbReference type="NCBI Taxonomy" id="30724"/>
    <lineage>
        <taxon>Eukaryota</taxon>
        <taxon>Metazoa</taxon>
        <taxon>Chordata</taxon>
        <taxon>Craniata</taxon>
        <taxon>Vertebrata</taxon>
        <taxon>Euteleostomi</taxon>
        <taxon>Actinopterygii</taxon>
        <taxon>Neopterygii</taxon>
        <taxon>Teleostei</taxon>
        <taxon>Clupei</taxon>
        <taxon>Clupeiformes</taxon>
        <taxon>Clupeoidei</taxon>
        <taxon>Clupeidae</taxon>
        <taxon>Clupea</taxon>
    </lineage>
</organism>
<feature type="peptide" id="PRO_0000044306" description="Protamine-YII">
    <location>
        <begin position="1"/>
        <end position="30"/>
    </location>
</feature>
<feature type="region of interest" description="Disordered" evidence="1">
    <location>
        <begin position="1"/>
        <end position="30"/>
    </location>
</feature>